<proteinExistence type="inferred from homology"/>
<sequence>MATSRDRLGTLEAEGSSGRQGYSGVEVVLSSDPATPAPLCPHELGPTLLFVKVNQGKEETRRFYACSACRDRKDCNFFQWEDEKLSGARLAAREAHNRSCQPPLSRSQCVERYLKFIELPLSQRKFCQSCQQLLLPDDEEKHHEHQVVGDVSITQLKRPSKLLYPLENKKTNAQYLFADRSCLFLVDLLSNLGFRRVLCVGTPRLHELIRLKESGGTKSNIRSLLLDIDFRYSQFYMEDSFCHYNMFNHHFFDGKAALEVCKTFLQEDKGEGVIMVTDPPFGGLVEPLAVTFKKLIAMWKEGHSQDNSQKELPIFWIFPYFFESRICQFFPSFCMLDYQVVDYDNHALYKHGKTGRKQSPVRIFTNIPPNKIILPIEEGYRFCPLCQRYVSLENQHCEHCNSCTSKDGRKWNHCFLCKKCVKPSWIHCSICNHCALPDHSCKGPKDGCFICGELDHKRSACPNISTSKKVNKAVRKQKQRKSNKMKMETTKGQSMNHTSATRKKKRRERTHQYLCS</sequence>
<dbReference type="EC" id="2.1.1.-" evidence="1"/>
<dbReference type="EMBL" id="DAAA02017163">
    <property type="status" value="NOT_ANNOTATED_CDS"/>
    <property type="molecule type" value="Genomic_DNA"/>
</dbReference>
<dbReference type="EMBL" id="DAAA02017164">
    <property type="status" value="NOT_ANNOTATED_CDS"/>
    <property type="molecule type" value="Genomic_DNA"/>
</dbReference>
<dbReference type="SMR" id="E1BGQ2"/>
<dbReference type="FunCoup" id="E1BGQ2">
    <property type="interactions" value="3134"/>
</dbReference>
<dbReference type="STRING" id="9913.ENSBTAP00000009526"/>
<dbReference type="PaxDb" id="9913-ENSBTAP00000009526"/>
<dbReference type="eggNOG" id="KOG4399">
    <property type="taxonomic scope" value="Eukaryota"/>
</dbReference>
<dbReference type="HOGENOM" id="CLU_034589_0_0_1"/>
<dbReference type="InParanoid" id="E1BGQ2"/>
<dbReference type="OrthoDB" id="431817at2759"/>
<dbReference type="TreeFam" id="TF313872"/>
<dbReference type="Proteomes" id="UP000009136">
    <property type="component" value="Unplaced"/>
</dbReference>
<dbReference type="GO" id="GO:0005737">
    <property type="term" value="C:cytoplasm"/>
    <property type="evidence" value="ECO:0000250"/>
    <property type="project" value="UniProtKB"/>
</dbReference>
<dbReference type="GO" id="GO:0005730">
    <property type="term" value="C:nucleolus"/>
    <property type="evidence" value="ECO:0000250"/>
    <property type="project" value="UniProtKB"/>
</dbReference>
<dbReference type="GO" id="GO:0003676">
    <property type="term" value="F:nucleic acid binding"/>
    <property type="evidence" value="ECO:0007669"/>
    <property type="project" value="InterPro"/>
</dbReference>
<dbReference type="GO" id="GO:0008988">
    <property type="term" value="F:rRNA (adenine-N6-)-methyltransferase activity"/>
    <property type="evidence" value="ECO:0000250"/>
    <property type="project" value="UniProtKB"/>
</dbReference>
<dbReference type="GO" id="GO:1904047">
    <property type="term" value="F:S-adenosyl-L-methionine binding"/>
    <property type="evidence" value="ECO:0000250"/>
    <property type="project" value="UniProtKB"/>
</dbReference>
<dbReference type="GO" id="GO:0008270">
    <property type="term" value="F:zinc ion binding"/>
    <property type="evidence" value="ECO:0000250"/>
    <property type="project" value="UniProtKB"/>
</dbReference>
<dbReference type="GO" id="GO:0045727">
    <property type="term" value="P:positive regulation of translation"/>
    <property type="evidence" value="ECO:0000250"/>
    <property type="project" value="UniProtKB"/>
</dbReference>
<dbReference type="GO" id="GO:0031167">
    <property type="term" value="P:rRNA methylation"/>
    <property type="evidence" value="ECO:0000250"/>
    <property type="project" value="UniProtKB"/>
</dbReference>
<dbReference type="InterPro" id="IPR002052">
    <property type="entry name" value="DNA_methylase_N6_adenine_CS"/>
</dbReference>
<dbReference type="InterPro" id="IPR041370">
    <property type="entry name" value="Mlase_EEF1AKMT1/ZCCHC4"/>
</dbReference>
<dbReference type="InterPro" id="IPR039846">
    <property type="entry name" value="ZCCHC4"/>
</dbReference>
<dbReference type="InterPro" id="IPR010666">
    <property type="entry name" value="Znf_GRF"/>
</dbReference>
<dbReference type="PANTHER" id="PTHR13493:SF3">
    <property type="entry name" value="RRNA N6-ADENOSINE-METHYLTRANSFERASE ZCCHC4"/>
    <property type="match status" value="1"/>
</dbReference>
<dbReference type="PANTHER" id="PTHR13493">
    <property type="entry name" value="ZINC FINGER CCHC DOMAIN-CONTAINING"/>
    <property type="match status" value="1"/>
</dbReference>
<dbReference type="Pfam" id="PF10237">
    <property type="entry name" value="N6-adenineMlase"/>
    <property type="match status" value="1"/>
</dbReference>
<dbReference type="Pfam" id="PF06839">
    <property type="entry name" value="Zn_ribbon_GRF"/>
    <property type="match status" value="1"/>
</dbReference>
<dbReference type="PROSITE" id="PS50216">
    <property type="entry name" value="DHHC"/>
    <property type="match status" value="1"/>
</dbReference>
<dbReference type="PROSITE" id="PS00092">
    <property type="entry name" value="N6_MTASE"/>
    <property type="match status" value="1"/>
</dbReference>
<dbReference type="PROSITE" id="PS51999">
    <property type="entry name" value="ZF_GRF"/>
    <property type="match status" value="1"/>
</dbReference>
<accession>E1BGQ2</accession>
<evidence type="ECO:0000250" key="1">
    <source>
        <dbReference type="UniProtKB" id="Q9H5U6"/>
    </source>
</evidence>
<evidence type="ECO:0000255" key="2">
    <source>
        <dbReference type="PROSITE-ProRule" id="PRU00067"/>
    </source>
</evidence>
<evidence type="ECO:0000255" key="3">
    <source>
        <dbReference type="PROSITE-ProRule" id="PRU01343"/>
    </source>
</evidence>
<evidence type="ECO:0000256" key="4">
    <source>
        <dbReference type="SAM" id="MobiDB-lite"/>
    </source>
</evidence>
<evidence type="ECO:0000305" key="5"/>
<feature type="chain" id="PRO_0000417068" description="rRNA N(6)-adenosine-methyltransferase ZCCHC4">
    <location>
        <begin position="1"/>
        <end position="516"/>
    </location>
</feature>
<feature type="domain" description="DHHC" evidence="2">
    <location>
        <begin position="398"/>
        <end position="448"/>
    </location>
</feature>
<feature type="zinc finger region" description="GRF-type" evidence="3">
    <location>
        <begin position="40"/>
        <end position="84"/>
    </location>
</feature>
<feature type="zinc finger region" description="CCHC-type">
    <location>
        <begin position="446"/>
        <end position="463"/>
    </location>
</feature>
<feature type="region of interest" description="Regulatory loop" evidence="1">
    <location>
        <begin position="339"/>
        <end position="360"/>
    </location>
</feature>
<feature type="region of interest" description="Disordered" evidence="4">
    <location>
        <begin position="472"/>
        <end position="516"/>
    </location>
</feature>
<feature type="compositionally biased region" description="Basic residues" evidence="4">
    <location>
        <begin position="472"/>
        <end position="484"/>
    </location>
</feature>
<feature type="compositionally biased region" description="Polar residues" evidence="4">
    <location>
        <begin position="490"/>
        <end position="499"/>
    </location>
</feature>
<feature type="compositionally biased region" description="Basic residues" evidence="4">
    <location>
        <begin position="500"/>
        <end position="509"/>
    </location>
</feature>
<feature type="binding site" evidence="3">
    <location>
        <position position="40"/>
    </location>
    <ligand>
        <name>Zn(2+)</name>
        <dbReference type="ChEBI" id="CHEBI:29105"/>
        <label>1</label>
    </ligand>
</feature>
<feature type="binding site" evidence="3">
    <location>
        <position position="42"/>
    </location>
    <ligand>
        <name>Zn(2+)</name>
        <dbReference type="ChEBI" id="CHEBI:29105"/>
        <label>1</label>
    </ligand>
</feature>
<feature type="binding site" evidence="3">
    <location>
        <position position="66"/>
    </location>
    <ligand>
        <name>Zn(2+)</name>
        <dbReference type="ChEBI" id="CHEBI:29105"/>
        <label>1</label>
    </ligand>
</feature>
<feature type="binding site" evidence="3">
    <location>
        <position position="75"/>
    </location>
    <ligand>
        <name>Zn(2+)</name>
        <dbReference type="ChEBI" id="CHEBI:29105"/>
        <label>1</label>
    </ligand>
</feature>
<feature type="binding site" evidence="1">
    <location>
        <position position="127"/>
    </location>
    <ligand>
        <name>Zn(2+)</name>
        <dbReference type="ChEBI" id="CHEBI:29105"/>
        <label>2</label>
    </ligand>
</feature>
<feature type="binding site" evidence="1">
    <location>
        <position position="130"/>
    </location>
    <ligand>
        <name>Zn(2+)</name>
        <dbReference type="ChEBI" id="CHEBI:29105"/>
        <label>2</label>
    </ligand>
</feature>
<feature type="binding site" evidence="1">
    <location>
        <position position="142"/>
    </location>
    <ligand>
        <name>Zn(2+)</name>
        <dbReference type="ChEBI" id="CHEBI:29105"/>
        <label>2</label>
    </ligand>
</feature>
<feature type="binding site" evidence="1">
    <location>
        <position position="145"/>
    </location>
    <ligand>
        <name>Zn(2+)</name>
        <dbReference type="ChEBI" id="CHEBI:29105"/>
        <label>2</label>
    </ligand>
</feature>
<feature type="binding site" evidence="1">
    <location>
        <begin position="174"/>
        <end position="177"/>
    </location>
    <ligand>
        <name>S-adenosyl-L-methionine</name>
        <dbReference type="ChEBI" id="CHEBI:59789"/>
    </ligand>
</feature>
<feature type="binding site" evidence="1">
    <location>
        <position position="204"/>
    </location>
    <ligand>
        <name>S-adenosyl-L-methionine</name>
        <dbReference type="ChEBI" id="CHEBI:59789"/>
    </ligand>
</feature>
<feature type="binding site" evidence="1">
    <location>
        <position position="227"/>
    </location>
    <ligand>
        <name>S-adenosyl-L-methionine</name>
        <dbReference type="ChEBI" id="CHEBI:59789"/>
    </ligand>
</feature>
<feature type="binding site" evidence="1">
    <location>
        <begin position="245"/>
        <end position="246"/>
    </location>
    <ligand>
        <name>S-adenosyl-L-methionine</name>
        <dbReference type="ChEBI" id="CHEBI:59789"/>
    </ligand>
</feature>
<feature type="binding site" evidence="1">
    <location>
        <position position="278"/>
    </location>
    <ligand>
        <name>S-adenosyl-L-methionine</name>
        <dbReference type="ChEBI" id="CHEBI:59789"/>
    </ligand>
</feature>
<feature type="binding site" evidence="1">
    <location>
        <position position="383"/>
    </location>
    <ligand>
        <name>Zn(2+)</name>
        <dbReference type="ChEBI" id="CHEBI:29105"/>
        <label>3</label>
    </ligand>
</feature>
<feature type="binding site" evidence="1">
    <location>
        <position position="386"/>
    </location>
    <ligand>
        <name>Zn(2+)</name>
        <dbReference type="ChEBI" id="CHEBI:29105"/>
        <label>3</label>
    </ligand>
</feature>
<feature type="binding site" evidence="1">
    <location>
        <position position="396"/>
    </location>
    <ligand>
        <name>Zn(2+)</name>
        <dbReference type="ChEBI" id="CHEBI:29105"/>
        <label>3</label>
    </ligand>
</feature>
<feature type="binding site" evidence="1">
    <location>
        <position position="397"/>
    </location>
    <ligand>
        <name>Zn(2+)</name>
        <dbReference type="ChEBI" id="CHEBI:29105"/>
        <label>4</label>
    </ligand>
</feature>
<feature type="binding site" evidence="1">
    <location>
        <position position="400"/>
    </location>
    <ligand>
        <name>Zn(2+)</name>
        <dbReference type="ChEBI" id="CHEBI:29105"/>
        <label>4</label>
    </ligand>
</feature>
<feature type="binding site" evidence="1">
    <location>
        <position position="403"/>
    </location>
    <ligand>
        <name>Zn(2+)</name>
        <dbReference type="ChEBI" id="CHEBI:29105"/>
        <label>3</label>
    </ligand>
</feature>
<feature type="binding site" evidence="1">
    <location>
        <position position="413"/>
    </location>
    <ligand>
        <name>Zn(2+)</name>
        <dbReference type="ChEBI" id="CHEBI:29105"/>
        <label>4</label>
    </ligand>
</feature>
<feature type="binding site" evidence="1">
    <location>
        <position position="414"/>
    </location>
    <ligand>
        <name>Zn(2+)</name>
        <dbReference type="ChEBI" id="CHEBI:29105"/>
        <label>5</label>
    </ligand>
</feature>
<feature type="binding site" evidence="1">
    <location>
        <position position="417"/>
    </location>
    <ligand>
        <name>Zn(2+)</name>
        <dbReference type="ChEBI" id="CHEBI:29105"/>
        <label>5</label>
    </ligand>
</feature>
<feature type="binding site" evidence="1">
    <location>
        <position position="420"/>
    </location>
    <ligand>
        <name>Zn(2+)</name>
        <dbReference type="ChEBI" id="CHEBI:29105"/>
        <label>4</label>
    </ligand>
</feature>
<feature type="binding site" evidence="1">
    <location>
        <position position="427"/>
    </location>
    <ligand>
        <name>Zn(2+)</name>
        <dbReference type="ChEBI" id="CHEBI:29105"/>
        <label>5</label>
    </ligand>
</feature>
<feature type="binding site" evidence="1">
    <location>
        <position position="428"/>
    </location>
    <ligand>
        <name>Zn(2+)</name>
        <dbReference type="ChEBI" id="CHEBI:29105"/>
        <label>6</label>
    </ligand>
</feature>
<feature type="binding site" evidence="1">
    <location>
        <position position="431"/>
    </location>
    <ligand>
        <name>Zn(2+)</name>
        <dbReference type="ChEBI" id="CHEBI:29105"/>
        <label>6</label>
    </ligand>
</feature>
<feature type="binding site" evidence="1">
    <location>
        <position position="434"/>
    </location>
    <ligand>
        <name>Zn(2+)</name>
        <dbReference type="ChEBI" id="CHEBI:29105"/>
        <label>5</label>
    </ligand>
</feature>
<feature type="binding site" evidence="1">
    <location>
        <position position="439"/>
    </location>
    <ligand>
        <name>Zn(2+)</name>
        <dbReference type="ChEBI" id="CHEBI:29105"/>
        <label>6</label>
    </ligand>
</feature>
<feature type="binding site" evidence="1">
    <location>
        <position position="441"/>
    </location>
    <ligand>
        <name>Zn(2+)</name>
        <dbReference type="ChEBI" id="CHEBI:29105"/>
        <label>6</label>
    </ligand>
</feature>
<organism>
    <name type="scientific">Bos taurus</name>
    <name type="common">Bovine</name>
    <dbReference type="NCBI Taxonomy" id="9913"/>
    <lineage>
        <taxon>Eukaryota</taxon>
        <taxon>Metazoa</taxon>
        <taxon>Chordata</taxon>
        <taxon>Craniata</taxon>
        <taxon>Vertebrata</taxon>
        <taxon>Euteleostomi</taxon>
        <taxon>Mammalia</taxon>
        <taxon>Eutheria</taxon>
        <taxon>Laurasiatheria</taxon>
        <taxon>Artiodactyla</taxon>
        <taxon>Ruminantia</taxon>
        <taxon>Pecora</taxon>
        <taxon>Bovidae</taxon>
        <taxon>Bovinae</taxon>
        <taxon>Bos</taxon>
    </lineage>
</organism>
<comment type="function">
    <text evidence="1">rRNA N6-methyltransferase that specifically methylates the adenine in position 4220 of 28S rRNA. N6-methylation of adenine(4220) in 28S rRNA is required for translation.</text>
</comment>
<comment type="catalytic activity">
    <reaction evidence="1">
        <text>adenosine(4220) in 28S rRNA + S-adenosyl-L-methionine = N(6)-methyladenosine(4220) in 28S rRNA + S-adenosyl-L-homocysteine + H(+)</text>
        <dbReference type="Rhea" id="RHEA:58724"/>
        <dbReference type="Rhea" id="RHEA-COMP:16142"/>
        <dbReference type="Rhea" id="RHEA-COMP:16143"/>
        <dbReference type="ChEBI" id="CHEBI:15378"/>
        <dbReference type="ChEBI" id="CHEBI:57856"/>
        <dbReference type="ChEBI" id="CHEBI:59789"/>
        <dbReference type="ChEBI" id="CHEBI:74411"/>
        <dbReference type="ChEBI" id="CHEBI:74449"/>
    </reaction>
</comment>
<comment type="subunit">
    <text evidence="1">Interacts with components of the ASC-1 complex TRIP4, ASCC1, ASCC2 and ASCC3. Interact with AHCYL1 and AHCYL2. Interact with YTHDC2.</text>
</comment>
<comment type="subcellular location">
    <subcellularLocation>
        <location evidence="1">Cytoplasm</location>
    </subcellularLocation>
    <subcellularLocation>
        <location evidence="1">Nucleus</location>
        <location evidence="1">Nucleolus</location>
    </subcellularLocation>
    <text evidence="1">Accumulates in the nucleolus, where ribosome biogenesis takes place.</text>
</comment>
<comment type="domain">
    <text evidence="1">The regulatory loop blocks the catalytic center by bridging the methyltransferase domain and the C-terminal CCHC-type zinc finger, resulting in an autoinhibitory conformation.</text>
</comment>
<comment type="similarity">
    <text evidence="5">Belongs to the ZCCHC4 family.</text>
</comment>
<protein>
    <recommendedName>
        <fullName evidence="5">rRNA N(6)-adenosine-methyltransferase ZCCHC4</fullName>
        <ecNumber evidence="1">2.1.1.-</ecNumber>
    </recommendedName>
    <alternativeName>
        <fullName evidence="5">Zinc finger CCHC domain-containing protein 4</fullName>
    </alternativeName>
</protein>
<reference key="1">
    <citation type="journal article" date="2009" name="Genome Biol.">
        <title>A whole-genome assembly of the domestic cow, Bos taurus.</title>
        <authorList>
            <person name="Zimin A.V."/>
            <person name="Delcher A.L."/>
            <person name="Florea L."/>
            <person name="Kelley D.R."/>
            <person name="Schatz M.C."/>
            <person name="Puiu D."/>
            <person name="Hanrahan F."/>
            <person name="Pertea G."/>
            <person name="Van Tassell C.P."/>
            <person name="Sonstegard T.S."/>
            <person name="Marcais G."/>
            <person name="Roberts M."/>
            <person name="Subramanian P."/>
            <person name="Yorke J.A."/>
            <person name="Salzberg S.L."/>
        </authorList>
    </citation>
    <scope>NUCLEOTIDE SEQUENCE [LARGE SCALE GENOMIC DNA]</scope>
    <source>
        <strain>Hereford</strain>
    </source>
</reference>
<keyword id="KW-0963">Cytoplasm</keyword>
<keyword id="KW-0479">Metal-binding</keyword>
<keyword id="KW-0489">Methyltransferase</keyword>
<keyword id="KW-0539">Nucleus</keyword>
<keyword id="KW-1185">Reference proteome</keyword>
<keyword id="KW-0949">S-adenosyl-L-methionine</keyword>
<keyword id="KW-0808">Transferase</keyword>
<keyword id="KW-0862">Zinc</keyword>
<keyword id="KW-0863">Zinc-finger</keyword>
<gene>
    <name evidence="1" type="primary">ZCCHC4</name>
</gene>
<name>ZCHC4_BOVIN</name>